<sequence>MEFRYLPMTNQDKQEMLDAIGIKSTEELFSDIPEHVRFKGEMNLKAPISEYELTKELTELASRNIHTKEYTSFLGAGVYDHYIPSVVDHVISRSEFYTAYTPYQPEISQGELQAIFEFQTMISELTGLPVANSSMYDGGTALAEAVNLSAAHTKRKKVLVSKAVHPEYRAVIDSYTRGQSIDIVEIDTVNGVTDLAQLDQAIDETIAGVVVQYPNFFGQLEPMKKIEQLLENHQKTMLIVSSNPLALGYLTPPGEFGADIVTGDTQVFGIPAQFGGPHCGYFATSKKLMRKVPGRLVGETVDEEGTRGYVLTLQAREQHIRRDKATSNICSNQALNALASSVAMSSIGKHGLRKLASVNMQKARYARKKLLEAGVELAFDGSFFNEFVIKVPGSVSKINKQLLDKGIIAGYDLAKDDKSLEGYMLIAVTEVRTKQEIDQFVKELGDIHV</sequence>
<proteinExistence type="inferred from homology"/>
<name>GCSPA_OCEIH</name>
<keyword id="KW-0560">Oxidoreductase</keyword>
<keyword id="KW-1185">Reference proteome</keyword>
<gene>
    <name evidence="1" type="primary">gcvPA</name>
    <name type="ordered locus">OB1903</name>
</gene>
<accession>Q8CXE0</accession>
<comment type="function">
    <text evidence="1">The glycine cleavage system catalyzes the degradation of glycine. The P protein binds the alpha-amino group of glycine through its pyridoxal phosphate cofactor; CO(2) is released and the remaining methylamine moiety is then transferred to the lipoamide cofactor of the H protein.</text>
</comment>
<comment type="catalytic activity">
    <reaction evidence="1">
        <text>N(6)-[(R)-lipoyl]-L-lysyl-[glycine-cleavage complex H protein] + glycine + H(+) = N(6)-[(R)-S(8)-aminomethyldihydrolipoyl]-L-lysyl-[glycine-cleavage complex H protein] + CO2</text>
        <dbReference type="Rhea" id="RHEA:24304"/>
        <dbReference type="Rhea" id="RHEA-COMP:10494"/>
        <dbReference type="Rhea" id="RHEA-COMP:10495"/>
        <dbReference type="ChEBI" id="CHEBI:15378"/>
        <dbReference type="ChEBI" id="CHEBI:16526"/>
        <dbReference type="ChEBI" id="CHEBI:57305"/>
        <dbReference type="ChEBI" id="CHEBI:83099"/>
        <dbReference type="ChEBI" id="CHEBI:83143"/>
        <dbReference type="EC" id="1.4.4.2"/>
    </reaction>
</comment>
<comment type="subunit">
    <text evidence="1">The glycine cleavage system is composed of four proteins: P, T, L and H. In this organism, the P 'protein' is a heterodimer of two subunits.</text>
</comment>
<comment type="similarity">
    <text evidence="1">Belongs to the GcvP family. N-terminal subunit subfamily.</text>
</comment>
<evidence type="ECO:0000255" key="1">
    <source>
        <dbReference type="HAMAP-Rule" id="MF_00712"/>
    </source>
</evidence>
<dbReference type="EC" id="1.4.4.2" evidence="1"/>
<dbReference type="EMBL" id="BA000028">
    <property type="protein sequence ID" value="BAC13859.1"/>
    <property type="molecule type" value="Genomic_DNA"/>
</dbReference>
<dbReference type="RefSeq" id="WP_011066300.1">
    <property type="nucleotide sequence ID" value="NC_004193.1"/>
</dbReference>
<dbReference type="SMR" id="Q8CXE0"/>
<dbReference type="STRING" id="221109.gene:10734143"/>
<dbReference type="KEGG" id="oih:OB1903"/>
<dbReference type="eggNOG" id="COG0403">
    <property type="taxonomic scope" value="Bacteria"/>
</dbReference>
<dbReference type="HOGENOM" id="CLU_004620_0_2_9"/>
<dbReference type="OrthoDB" id="9771867at2"/>
<dbReference type="PhylomeDB" id="Q8CXE0"/>
<dbReference type="Proteomes" id="UP000000822">
    <property type="component" value="Chromosome"/>
</dbReference>
<dbReference type="GO" id="GO:0004375">
    <property type="term" value="F:glycine dehydrogenase (decarboxylating) activity"/>
    <property type="evidence" value="ECO:0007669"/>
    <property type="project" value="UniProtKB-EC"/>
</dbReference>
<dbReference type="GO" id="GO:0019464">
    <property type="term" value="P:glycine decarboxylation via glycine cleavage system"/>
    <property type="evidence" value="ECO:0007669"/>
    <property type="project" value="UniProtKB-UniRule"/>
</dbReference>
<dbReference type="GO" id="GO:0009116">
    <property type="term" value="P:nucleoside metabolic process"/>
    <property type="evidence" value="ECO:0007669"/>
    <property type="project" value="InterPro"/>
</dbReference>
<dbReference type="CDD" id="cd00613">
    <property type="entry name" value="GDC-P"/>
    <property type="match status" value="1"/>
</dbReference>
<dbReference type="Gene3D" id="3.90.1150.10">
    <property type="entry name" value="Aspartate Aminotransferase, domain 1"/>
    <property type="match status" value="1"/>
</dbReference>
<dbReference type="Gene3D" id="3.40.640.10">
    <property type="entry name" value="Type I PLP-dependent aspartate aminotransferase-like (Major domain)"/>
    <property type="match status" value="1"/>
</dbReference>
<dbReference type="HAMAP" id="MF_00712">
    <property type="entry name" value="GcvPA"/>
    <property type="match status" value="1"/>
</dbReference>
<dbReference type="InterPro" id="IPR023010">
    <property type="entry name" value="GcvPA"/>
</dbReference>
<dbReference type="InterPro" id="IPR049315">
    <property type="entry name" value="GDC-P_N"/>
</dbReference>
<dbReference type="InterPro" id="IPR020581">
    <property type="entry name" value="GDC_P"/>
</dbReference>
<dbReference type="InterPro" id="IPR015424">
    <property type="entry name" value="PyrdxlP-dep_Trfase"/>
</dbReference>
<dbReference type="InterPro" id="IPR015421">
    <property type="entry name" value="PyrdxlP-dep_Trfase_major"/>
</dbReference>
<dbReference type="InterPro" id="IPR015422">
    <property type="entry name" value="PyrdxlP-dep_Trfase_small"/>
</dbReference>
<dbReference type="NCBIfam" id="NF001696">
    <property type="entry name" value="PRK00451.1"/>
    <property type="match status" value="1"/>
</dbReference>
<dbReference type="PANTHER" id="PTHR42806">
    <property type="entry name" value="GLYCINE CLEAVAGE SYSTEM P-PROTEIN"/>
    <property type="match status" value="1"/>
</dbReference>
<dbReference type="PANTHER" id="PTHR42806:SF1">
    <property type="entry name" value="GLYCINE DEHYDROGENASE (DECARBOXYLATING)"/>
    <property type="match status" value="1"/>
</dbReference>
<dbReference type="Pfam" id="PF02347">
    <property type="entry name" value="GDC-P"/>
    <property type="match status" value="1"/>
</dbReference>
<dbReference type="PIRSF" id="PIRSF006815">
    <property type="entry name" value="GcvPA"/>
    <property type="match status" value="1"/>
</dbReference>
<dbReference type="SUPFAM" id="SSF53383">
    <property type="entry name" value="PLP-dependent transferases"/>
    <property type="match status" value="1"/>
</dbReference>
<reference key="1">
    <citation type="journal article" date="2002" name="Nucleic Acids Res.">
        <title>Genome sequence of Oceanobacillus iheyensis isolated from the Iheya Ridge and its unexpected adaptive capabilities to extreme environments.</title>
        <authorList>
            <person name="Takami H."/>
            <person name="Takaki Y."/>
            <person name="Uchiyama I."/>
        </authorList>
    </citation>
    <scope>NUCLEOTIDE SEQUENCE [LARGE SCALE GENOMIC DNA]</scope>
    <source>
        <strain>DSM 14371 / CIP 107618 / JCM 11309 / KCTC 3954 / HTE831</strain>
    </source>
</reference>
<feature type="chain" id="PRO_0000166969" description="Probable glycine dehydrogenase (decarboxylating) subunit 1">
    <location>
        <begin position="1"/>
        <end position="449"/>
    </location>
</feature>
<organism>
    <name type="scientific">Oceanobacillus iheyensis (strain DSM 14371 / CIP 107618 / JCM 11309 / KCTC 3954 / HTE831)</name>
    <dbReference type="NCBI Taxonomy" id="221109"/>
    <lineage>
        <taxon>Bacteria</taxon>
        <taxon>Bacillati</taxon>
        <taxon>Bacillota</taxon>
        <taxon>Bacilli</taxon>
        <taxon>Bacillales</taxon>
        <taxon>Bacillaceae</taxon>
        <taxon>Oceanobacillus</taxon>
    </lineage>
</organism>
<protein>
    <recommendedName>
        <fullName evidence="1">Probable glycine dehydrogenase (decarboxylating) subunit 1</fullName>
        <ecNumber evidence="1">1.4.4.2</ecNumber>
    </recommendedName>
    <alternativeName>
        <fullName evidence="1">Glycine cleavage system P-protein subunit 1</fullName>
    </alternativeName>
    <alternativeName>
        <fullName evidence="1">Glycine decarboxylase subunit 1</fullName>
    </alternativeName>
    <alternativeName>
        <fullName evidence="1">Glycine dehydrogenase (aminomethyl-transferring) subunit 1</fullName>
    </alternativeName>
</protein>